<organism>
    <name type="scientific">Shigella flexneri serotype 5b (strain 8401)</name>
    <dbReference type="NCBI Taxonomy" id="373384"/>
    <lineage>
        <taxon>Bacteria</taxon>
        <taxon>Pseudomonadati</taxon>
        <taxon>Pseudomonadota</taxon>
        <taxon>Gammaproteobacteria</taxon>
        <taxon>Enterobacterales</taxon>
        <taxon>Enterobacteriaceae</taxon>
        <taxon>Shigella</taxon>
    </lineage>
</organism>
<proteinExistence type="inferred from homology"/>
<accession>Q0T0J8</accession>
<keyword id="KW-0687">Ribonucleoprotein</keyword>
<keyword id="KW-0689">Ribosomal protein</keyword>
<gene>
    <name evidence="1" type="primary">rpsU</name>
    <name type="ordered locus">SFV_3105</name>
</gene>
<feature type="chain" id="PRO_1000005175" description="Small ribosomal subunit protein bS21">
    <location>
        <begin position="1"/>
        <end position="71"/>
    </location>
</feature>
<feature type="region of interest" description="Disordered" evidence="2">
    <location>
        <begin position="43"/>
        <end position="71"/>
    </location>
</feature>
<feature type="compositionally biased region" description="Basic residues" evidence="2">
    <location>
        <begin position="46"/>
        <end position="59"/>
    </location>
</feature>
<feature type="compositionally biased region" description="Basic and acidic residues" evidence="2">
    <location>
        <begin position="60"/>
        <end position="71"/>
    </location>
</feature>
<evidence type="ECO:0000255" key="1">
    <source>
        <dbReference type="HAMAP-Rule" id="MF_00358"/>
    </source>
</evidence>
<evidence type="ECO:0000256" key="2">
    <source>
        <dbReference type="SAM" id="MobiDB-lite"/>
    </source>
</evidence>
<evidence type="ECO:0000305" key="3"/>
<dbReference type="EMBL" id="CP000266">
    <property type="protein sequence ID" value="ABF05167.1"/>
    <property type="molecule type" value="Genomic_DNA"/>
</dbReference>
<dbReference type="RefSeq" id="WP_001144069.1">
    <property type="nucleotide sequence ID" value="NC_008258.1"/>
</dbReference>
<dbReference type="SMR" id="Q0T0J8"/>
<dbReference type="GeneID" id="98390195"/>
<dbReference type="KEGG" id="sfv:SFV_3105"/>
<dbReference type="HOGENOM" id="CLU_159258_1_0_6"/>
<dbReference type="Proteomes" id="UP000000659">
    <property type="component" value="Chromosome"/>
</dbReference>
<dbReference type="GO" id="GO:1990904">
    <property type="term" value="C:ribonucleoprotein complex"/>
    <property type="evidence" value="ECO:0007669"/>
    <property type="project" value="UniProtKB-KW"/>
</dbReference>
<dbReference type="GO" id="GO:0005840">
    <property type="term" value="C:ribosome"/>
    <property type="evidence" value="ECO:0007669"/>
    <property type="project" value="UniProtKB-KW"/>
</dbReference>
<dbReference type="GO" id="GO:0003735">
    <property type="term" value="F:structural constituent of ribosome"/>
    <property type="evidence" value="ECO:0007669"/>
    <property type="project" value="InterPro"/>
</dbReference>
<dbReference type="GO" id="GO:0006412">
    <property type="term" value="P:translation"/>
    <property type="evidence" value="ECO:0007669"/>
    <property type="project" value="UniProtKB-UniRule"/>
</dbReference>
<dbReference type="FunFam" id="1.20.5.1150:FF:000001">
    <property type="entry name" value="30S ribosomal protein S21"/>
    <property type="match status" value="1"/>
</dbReference>
<dbReference type="Gene3D" id="1.20.5.1150">
    <property type="entry name" value="Ribosomal protein S8"/>
    <property type="match status" value="1"/>
</dbReference>
<dbReference type="HAMAP" id="MF_00358">
    <property type="entry name" value="Ribosomal_bS21"/>
    <property type="match status" value="1"/>
</dbReference>
<dbReference type="InterPro" id="IPR001911">
    <property type="entry name" value="Ribosomal_bS21"/>
</dbReference>
<dbReference type="InterPro" id="IPR018278">
    <property type="entry name" value="Ribosomal_bS21_CS"/>
</dbReference>
<dbReference type="InterPro" id="IPR038380">
    <property type="entry name" value="Ribosomal_bS21_sf"/>
</dbReference>
<dbReference type="NCBIfam" id="TIGR00030">
    <property type="entry name" value="S21p"/>
    <property type="match status" value="1"/>
</dbReference>
<dbReference type="PANTHER" id="PTHR21109">
    <property type="entry name" value="MITOCHONDRIAL 28S RIBOSOMAL PROTEIN S21"/>
    <property type="match status" value="1"/>
</dbReference>
<dbReference type="PANTHER" id="PTHR21109:SF22">
    <property type="entry name" value="SMALL RIBOSOMAL SUBUNIT PROTEIN BS21"/>
    <property type="match status" value="1"/>
</dbReference>
<dbReference type="Pfam" id="PF01165">
    <property type="entry name" value="Ribosomal_S21"/>
    <property type="match status" value="1"/>
</dbReference>
<dbReference type="PRINTS" id="PR00976">
    <property type="entry name" value="RIBOSOMALS21"/>
</dbReference>
<dbReference type="PROSITE" id="PS01181">
    <property type="entry name" value="RIBOSOMAL_S21"/>
    <property type="match status" value="1"/>
</dbReference>
<sequence>MPVIKVRENEPFDVALRRFKRSCEKAGVLAEVRRREFYEKPTTERKRAKASAVKRHAKKLARENARRTRLY</sequence>
<protein>
    <recommendedName>
        <fullName evidence="1">Small ribosomal subunit protein bS21</fullName>
    </recommendedName>
    <alternativeName>
        <fullName evidence="3">30S ribosomal protein S21</fullName>
    </alternativeName>
</protein>
<comment type="similarity">
    <text evidence="1">Belongs to the bacterial ribosomal protein bS21 family.</text>
</comment>
<reference key="1">
    <citation type="journal article" date="2006" name="BMC Genomics">
        <title>Complete genome sequence of Shigella flexneri 5b and comparison with Shigella flexneri 2a.</title>
        <authorList>
            <person name="Nie H."/>
            <person name="Yang F."/>
            <person name="Zhang X."/>
            <person name="Yang J."/>
            <person name="Chen L."/>
            <person name="Wang J."/>
            <person name="Xiong Z."/>
            <person name="Peng J."/>
            <person name="Sun L."/>
            <person name="Dong J."/>
            <person name="Xue Y."/>
            <person name="Xu X."/>
            <person name="Chen S."/>
            <person name="Yao Z."/>
            <person name="Shen Y."/>
            <person name="Jin Q."/>
        </authorList>
    </citation>
    <scope>NUCLEOTIDE SEQUENCE [LARGE SCALE GENOMIC DNA]</scope>
    <source>
        <strain>8401</strain>
    </source>
</reference>
<name>RS21_SHIF8</name>